<accession>Q5E3D2</accession>
<evidence type="ECO:0000255" key="1">
    <source>
        <dbReference type="HAMAP-Rule" id="MF_00168"/>
    </source>
</evidence>
<name>TGT_ALIF1</name>
<protein>
    <recommendedName>
        <fullName evidence="1">Queuine tRNA-ribosyltransferase</fullName>
        <ecNumber evidence="1">2.4.2.29</ecNumber>
    </recommendedName>
    <alternativeName>
        <fullName evidence="1">Guanine insertion enzyme</fullName>
    </alternativeName>
    <alternativeName>
        <fullName evidence="1">tRNA-guanine transglycosylase</fullName>
    </alternativeName>
</protein>
<keyword id="KW-0328">Glycosyltransferase</keyword>
<keyword id="KW-0479">Metal-binding</keyword>
<keyword id="KW-0671">Queuosine biosynthesis</keyword>
<keyword id="KW-1185">Reference proteome</keyword>
<keyword id="KW-0808">Transferase</keyword>
<keyword id="KW-0819">tRNA processing</keyword>
<keyword id="KW-0862">Zinc</keyword>
<proteinExistence type="inferred from homology"/>
<dbReference type="EC" id="2.4.2.29" evidence="1"/>
<dbReference type="EMBL" id="CP000020">
    <property type="protein sequence ID" value="AAW86464.1"/>
    <property type="molecule type" value="Genomic_DNA"/>
</dbReference>
<dbReference type="RefSeq" id="WP_005420569.1">
    <property type="nucleotide sequence ID" value="NZ_CAWLES010000001.1"/>
</dbReference>
<dbReference type="RefSeq" id="YP_205352.1">
    <property type="nucleotide sequence ID" value="NC_006840.2"/>
</dbReference>
<dbReference type="SMR" id="Q5E3D2"/>
<dbReference type="STRING" id="312309.VF_1969"/>
<dbReference type="EnsemblBacteria" id="AAW86464">
    <property type="protein sequence ID" value="AAW86464"/>
    <property type="gene ID" value="VF_1969"/>
</dbReference>
<dbReference type="GeneID" id="54164665"/>
<dbReference type="KEGG" id="vfi:VF_1969"/>
<dbReference type="PATRIC" id="fig|312309.11.peg.1996"/>
<dbReference type="eggNOG" id="COG0343">
    <property type="taxonomic scope" value="Bacteria"/>
</dbReference>
<dbReference type="HOGENOM" id="CLU_022060_0_1_6"/>
<dbReference type="OrthoDB" id="9805417at2"/>
<dbReference type="UniPathway" id="UPA00392"/>
<dbReference type="Proteomes" id="UP000000537">
    <property type="component" value="Chromosome I"/>
</dbReference>
<dbReference type="GO" id="GO:0005829">
    <property type="term" value="C:cytosol"/>
    <property type="evidence" value="ECO:0007669"/>
    <property type="project" value="TreeGrafter"/>
</dbReference>
<dbReference type="GO" id="GO:0046872">
    <property type="term" value="F:metal ion binding"/>
    <property type="evidence" value="ECO:0007669"/>
    <property type="project" value="UniProtKB-KW"/>
</dbReference>
<dbReference type="GO" id="GO:0008479">
    <property type="term" value="F:tRNA-guanosine(34) queuine transglycosylase activity"/>
    <property type="evidence" value="ECO:0007669"/>
    <property type="project" value="UniProtKB-UniRule"/>
</dbReference>
<dbReference type="GO" id="GO:0008616">
    <property type="term" value="P:queuosine biosynthetic process"/>
    <property type="evidence" value="ECO:0007669"/>
    <property type="project" value="UniProtKB-UniRule"/>
</dbReference>
<dbReference type="GO" id="GO:0002099">
    <property type="term" value="P:tRNA wobble guanine modification"/>
    <property type="evidence" value="ECO:0007669"/>
    <property type="project" value="TreeGrafter"/>
</dbReference>
<dbReference type="GO" id="GO:0101030">
    <property type="term" value="P:tRNA-guanine transglycosylation"/>
    <property type="evidence" value="ECO:0007669"/>
    <property type="project" value="InterPro"/>
</dbReference>
<dbReference type="FunFam" id="3.20.20.105:FF:000001">
    <property type="entry name" value="Queuine tRNA-ribosyltransferase"/>
    <property type="match status" value="1"/>
</dbReference>
<dbReference type="Gene3D" id="3.20.20.105">
    <property type="entry name" value="Queuine tRNA-ribosyltransferase-like"/>
    <property type="match status" value="1"/>
</dbReference>
<dbReference type="HAMAP" id="MF_00168">
    <property type="entry name" value="Q_tRNA_Tgt"/>
    <property type="match status" value="1"/>
</dbReference>
<dbReference type="InterPro" id="IPR050076">
    <property type="entry name" value="ArchSynthase1/Queuine_TRR"/>
</dbReference>
<dbReference type="InterPro" id="IPR004803">
    <property type="entry name" value="TGT"/>
</dbReference>
<dbReference type="InterPro" id="IPR036511">
    <property type="entry name" value="TGT-like_sf"/>
</dbReference>
<dbReference type="InterPro" id="IPR002616">
    <property type="entry name" value="tRNA_ribo_trans-like"/>
</dbReference>
<dbReference type="NCBIfam" id="TIGR00430">
    <property type="entry name" value="Q_tRNA_tgt"/>
    <property type="match status" value="1"/>
</dbReference>
<dbReference type="NCBIfam" id="TIGR00449">
    <property type="entry name" value="tgt_general"/>
    <property type="match status" value="1"/>
</dbReference>
<dbReference type="PANTHER" id="PTHR46499">
    <property type="entry name" value="QUEUINE TRNA-RIBOSYLTRANSFERASE"/>
    <property type="match status" value="1"/>
</dbReference>
<dbReference type="PANTHER" id="PTHR46499:SF1">
    <property type="entry name" value="QUEUINE TRNA-RIBOSYLTRANSFERASE"/>
    <property type="match status" value="1"/>
</dbReference>
<dbReference type="Pfam" id="PF01702">
    <property type="entry name" value="TGT"/>
    <property type="match status" value="1"/>
</dbReference>
<dbReference type="SUPFAM" id="SSF51713">
    <property type="entry name" value="tRNA-guanine transglycosylase"/>
    <property type="match status" value="1"/>
</dbReference>
<comment type="function">
    <text evidence="1">Catalyzes the base-exchange of a guanine (G) residue with the queuine precursor 7-aminomethyl-7-deazaguanine (PreQ1) at position 34 (anticodon wobble position) in tRNAs with GU(N) anticodons (tRNA-Asp, -Asn, -His and -Tyr). Catalysis occurs through a double-displacement mechanism. The nucleophile active site attacks the C1' of nucleotide 34 to detach the guanine base from the RNA, forming a covalent enzyme-RNA intermediate. The proton acceptor active site deprotonates the incoming PreQ1, allowing a nucleophilic attack on the C1' of the ribose to form the product. After dissociation, two additional enzymatic reactions on the tRNA convert PreQ1 to queuine (Q), resulting in the hypermodified nucleoside queuosine (7-(((4,5-cis-dihydroxy-2-cyclopenten-1-yl)amino)methyl)-7-deazaguanosine).</text>
</comment>
<comment type="catalytic activity">
    <reaction evidence="1">
        <text>7-aminomethyl-7-carbaguanine + guanosine(34) in tRNA = 7-aminomethyl-7-carbaguanosine(34) in tRNA + guanine</text>
        <dbReference type="Rhea" id="RHEA:24104"/>
        <dbReference type="Rhea" id="RHEA-COMP:10341"/>
        <dbReference type="Rhea" id="RHEA-COMP:10342"/>
        <dbReference type="ChEBI" id="CHEBI:16235"/>
        <dbReference type="ChEBI" id="CHEBI:58703"/>
        <dbReference type="ChEBI" id="CHEBI:74269"/>
        <dbReference type="ChEBI" id="CHEBI:82833"/>
        <dbReference type="EC" id="2.4.2.29"/>
    </reaction>
</comment>
<comment type="cofactor">
    <cofactor evidence="1">
        <name>Zn(2+)</name>
        <dbReference type="ChEBI" id="CHEBI:29105"/>
    </cofactor>
    <text evidence="1">Binds 1 zinc ion per subunit.</text>
</comment>
<comment type="pathway">
    <text evidence="1">tRNA modification; tRNA-queuosine biosynthesis.</text>
</comment>
<comment type="subunit">
    <text evidence="1">Homodimer. Within each dimer, one monomer is responsible for RNA recognition and catalysis, while the other monomer binds to the replacement base PreQ1.</text>
</comment>
<comment type="similarity">
    <text evidence="1">Belongs to the queuine tRNA-ribosyltransferase family.</text>
</comment>
<gene>
    <name evidence="1" type="primary">tgt</name>
    <name type="ordered locus">VF_1969</name>
</gene>
<feature type="chain" id="PRO_0000135551" description="Queuine tRNA-ribosyltransferase">
    <location>
        <begin position="1"/>
        <end position="375"/>
    </location>
</feature>
<feature type="region of interest" description="RNA binding" evidence="1">
    <location>
        <begin position="245"/>
        <end position="251"/>
    </location>
</feature>
<feature type="region of interest" description="RNA binding; important for wobble base 34 recognition" evidence="1">
    <location>
        <begin position="269"/>
        <end position="273"/>
    </location>
</feature>
<feature type="active site" description="Proton acceptor" evidence="1">
    <location>
        <position position="89"/>
    </location>
</feature>
<feature type="active site" description="Nucleophile" evidence="1">
    <location>
        <position position="264"/>
    </location>
</feature>
<feature type="binding site" evidence="1">
    <location>
        <begin position="89"/>
        <end position="93"/>
    </location>
    <ligand>
        <name>substrate</name>
    </ligand>
</feature>
<feature type="binding site" evidence="1">
    <location>
        <position position="143"/>
    </location>
    <ligand>
        <name>substrate</name>
    </ligand>
</feature>
<feature type="binding site" evidence="1">
    <location>
        <position position="187"/>
    </location>
    <ligand>
        <name>substrate</name>
    </ligand>
</feature>
<feature type="binding site" evidence="1">
    <location>
        <position position="214"/>
    </location>
    <ligand>
        <name>substrate</name>
    </ligand>
</feature>
<feature type="binding site" evidence="1">
    <location>
        <position position="302"/>
    </location>
    <ligand>
        <name>Zn(2+)</name>
        <dbReference type="ChEBI" id="CHEBI:29105"/>
    </ligand>
</feature>
<feature type="binding site" evidence="1">
    <location>
        <position position="304"/>
    </location>
    <ligand>
        <name>Zn(2+)</name>
        <dbReference type="ChEBI" id="CHEBI:29105"/>
    </ligand>
</feature>
<feature type="binding site" evidence="1">
    <location>
        <position position="307"/>
    </location>
    <ligand>
        <name>Zn(2+)</name>
        <dbReference type="ChEBI" id="CHEBI:29105"/>
    </ligand>
</feature>
<feature type="binding site" evidence="1">
    <location>
        <position position="333"/>
    </location>
    <ligand>
        <name>Zn(2+)</name>
        <dbReference type="ChEBI" id="CHEBI:29105"/>
    </ligand>
</feature>
<organism>
    <name type="scientific">Aliivibrio fischeri (strain ATCC 700601 / ES114)</name>
    <name type="common">Vibrio fischeri</name>
    <dbReference type="NCBI Taxonomy" id="312309"/>
    <lineage>
        <taxon>Bacteria</taxon>
        <taxon>Pseudomonadati</taxon>
        <taxon>Pseudomonadota</taxon>
        <taxon>Gammaproteobacteria</taxon>
        <taxon>Vibrionales</taxon>
        <taxon>Vibrionaceae</taxon>
        <taxon>Aliivibrio</taxon>
    </lineage>
</organism>
<reference key="1">
    <citation type="journal article" date="2005" name="Proc. Natl. Acad. Sci. U.S.A.">
        <title>Complete genome sequence of Vibrio fischeri: a symbiotic bacterium with pathogenic congeners.</title>
        <authorList>
            <person name="Ruby E.G."/>
            <person name="Urbanowski M."/>
            <person name="Campbell J."/>
            <person name="Dunn A."/>
            <person name="Faini M."/>
            <person name="Gunsalus R."/>
            <person name="Lostroh P."/>
            <person name="Lupp C."/>
            <person name="McCann J."/>
            <person name="Millikan D."/>
            <person name="Schaefer A."/>
            <person name="Stabb E."/>
            <person name="Stevens A."/>
            <person name="Visick K."/>
            <person name="Whistler C."/>
            <person name="Greenberg E.P."/>
        </authorList>
    </citation>
    <scope>NUCLEOTIDE SEQUENCE [LARGE SCALE GENOMIC DNA]</scope>
    <source>
        <strain>ATCC 700601 / ES114</strain>
    </source>
</reference>
<sequence length="375" mass="42912">MKYELIKKQGRARRGQLQFDRGTVETPAFMPVGTYGTVKGMTPEEVKGTGAEILLGNTFHLWLRPGQEIMKLHGDLHDFMNWKGPILTDSGGFQVFSLGKTRKITEEGVHFRSPVNGDKIFMDAEKSMQIQYDLGSDVVMIFDECTPYPATHDEARISMERSIRWAERSRNEFDRQENPNALFGIVQGGVYEDLRDVSVEALTKIGFDGYAVGGLAVGEPKEDMHRILEHTCPQLPEDKPRYLMGVGKPEDLVEGVRRGIDMFDCVMPTRNARNGHLFVTGGVIKIRNAKHKTDTTPLDPECDCYTCQNYSKSYLHHLDRCNEILGARLNTIHNLRYYQRIMASIRKALEEDRFEQFVEEFYARRDREVPPLKDL</sequence>